<feature type="chain" id="PRO_1000205759" description="Small ribosomal subunit protein bS16">
    <location>
        <begin position="1"/>
        <end position="81"/>
    </location>
</feature>
<dbReference type="EMBL" id="CP001107">
    <property type="protein sequence ID" value="ACR75260.1"/>
    <property type="molecule type" value="Genomic_DNA"/>
</dbReference>
<dbReference type="RefSeq" id="WP_012742359.1">
    <property type="nucleotide sequence ID" value="NZ_CAXSYD010000010.1"/>
</dbReference>
<dbReference type="SMR" id="C4Z929"/>
<dbReference type="STRING" id="515619.EUBREC_1506"/>
<dbReference type="PaxDb" id="515619-EUBREC_1506"/>
<dbReference type="GeneID" id="86988326"/>
<dbReference type="KEGG" id="ere:EUBREC_1506"/>
<dbReference type="HOGENOM" id="CLU_100590_5_0_9"/>
<dbReference type="Proteomes" id="UP000001477">
    <property type="component" value="Chromosome"/>
</dbReference>
<dbReference type="GO" id="GO:0005737">
    <property type="term" value="C:cytoplasm"/>
    <property type="evidence" value="ECO:0007669"/>
    <property type="project" value="UniProtKB-ARBA"/>
</dbReference>
<dbReference type="GO" id="GO:0015935">
    <property type="term" value="C:small ribosomal subunit"/>
    <property type="evidence" value="ECO:0007669"/>
    <property type="project" value="TreeGrafter"/>
</dbReference>
<dbReference type="GO" id="GO:0003735">
    <property type="term" value="F:structural constituent of ribosome"/>
    <property type="evidence" value="ECO:0007669"/>
    <property type="project" value="InterPro"/>
</dbReference>
<dbReference type="GO" id="GO:0006412">
    <property type="term" value="P:translation"/>
    <property type="evidence" value="ECO:0007669"/>
    <property type="project" value="UniProtKB-UniRule"/>
</dbReference>
<dbReference type="Gene3D" id="3.30.1320.10">
    <property type="match status" value="1"/>
</dbReference>
<dbReference type="HAMAP" id="MF_00385">
    <property type="entry name" value="Ribosomal_bS16"/>
    <property type="match status" value="1"/>
</dbReference>
<dbReference type="InterPro" id="IPR000307">
    <property type="entry name" value="Ribosomal_bS16"/>
</dbReference>
<dbReference type="InterPro" id="IPR023803">
    <property type="entry name" value="Ribosomal_bS16_dom_sf"/>
</dbReference>
<dbReference type="NCBIfam" id="TIGR00002">
    <property type="entry name" value="S16"/>
    <property type="match status" value="1"/>
</dbReference>
<dbReference type="PANTHER" id="PTHR12919">
    <property type="entry name" value="30S RIBOSOMAL PROTEIN S16"/>
    <property type="match status" value="1"/>
</dbReference>
<dbReference type="PANTHER" id="PTHR12919:SF20">
    <property type="entry name" value="SMALL RIBOSOMAL SUBUNIT PROTEIN BS16M"/>
    <property type="match status" value="1"/>
</dbReference>
<dbReference type="Pfam" id="PF00886">
    <property type="entry name" value="Ribosomal_S16"/>
    <property type="match status" value="1"/>
</dbReference>
<dbReference type="SUPFAM" id="SSF54565">
    <property type="entry name" value="Ribosomal protein S16"/>
    <property type="match status" value="1"/>
</dbReference>
<name>RS16_AGARV</name>
<reference key="1">
    <citation type="journal article" date="2009" name="Proc. Natl. Acad. Sci. U.S.A.">
        <title>Characterizing a model human gut microbiota composed of members of its two dominant bacterial phyla.</title>
        <authorList>
            <person name="Mahowald M.A."/>
            <person name="Rey F.E."/>
            <person name="Seedorf H."/>
            <person name="Turnbaugh P.J."/>
            <person name="Fulton R.S."/>
            <person name="Wollam A."/>
            <person name="Shah N."/>
            <person name="Wang C."/>
            <person name="Magrini V."/>
            <person name="Wilson R.K."/>
            <person name="Cantarel B.L."/>
            <person name="Coutinho P.M."/>
            <person name="Henrissat B."/>
            <person name="Crock L.W."/>
            <person name="Russell A."/>
            <person name="Verberkmoes N.C."/>
            <person name="Hettich R.L."/>
            <person name="Gordon J.I."/>
        </authorList>
    </citation>
    <scope>NUCLEOTIDE SEQUENCE [LARGE SCALE GENOMIC DNA]</scope>
    <source>
        <strain>ATCC 33656 / DSM 3377 / JCM 17463 / KCTC 5835 / LMG 30912 / VPI 0990</strain>
    </source>
</reference>
<keyword id="KW-0687">Ribonucleoprotein</keyword>
<keyword id="KW-0689">Ribosomal protein</keyword>
<evidence type="ECO:0000255" key="1">
    <source>
        <dbReference type="HAMAP-Rule" id="MF_00385"/>
    </source>
</evidence>
<evidence type="ECO:0000305" key="2"/>
<accession>C4Z929</accession>
<protein>
    <recommendedName>
        <fullName evidence="1">Small ribosomal subunit protein bS16</fullName>
    </recommendedName>
    <alternativeName>
        <fullName evidence="2">30S ribosomal protein S16</fullName>
    </alternativeName>
</protein>
<organism>
    <name type="scientific">Agathobacter rectalis (strain ATCC 33656 / DSM 3377 / JCM 17463 / KCTC 5835 / VPI 0990)</name>
    <name type="common">Eubacterium rectale</name>
    <dbReference type="NCBI Taxonomy" id="515619"/>
    <lineage>
        <taxon>Bacteria</taxon>
        <taxon>Bacillati</taxon>
        <taxon>Bacillota</taxon>
        <taxon>Clostridia</taxon>
        <taxon>Lachnospirales</taxon>
        <taxon>Lachnospiraceae</taxon>
        <taxon>Agathobacter</taxon>
    </lineage>
</organism>
<comment type="similarity">
    <text evidence="1">Belongs to the bacterial ribosomal protein bS16 family.</text>
</comment>
<gene>
    <name evidence="1" type="primary">rpsP</name>
    <name type="ordered locus">EUBREC_1506</name>
</gene>
<proteinExistence type="inferred from homology"/>
<sequence>MAVKIRLRRMGQKKAPFYRIVVADSRSPRDGRCIEEIGTYDPTKDPSEYHVNEELAKKWLSNGAQPTETVARIFKSAGIEK</sequence>